<name>RS3_ACIC1</name>
<organism>
    <name type="scientific">Acidothermus cellulolyticus (strain ATCC 43068 / DSM 8971 / 11B)</name>
    <dbReference type="NCBI Taxonomy" id="351607"/>
    <lineage>
        <taxon>Bacteria</taxon>
        <taxon>Bacillati</taxon>
        <taxon>Actinomycetota</taxon>
        <taxon>Actinomycetes</taxon>
        <taxon>Acidothermales</taxon>
        <taxon>Acidothermaceae</taxon>
        <taxon>Acidothermus</taxon>
    </lineage>
</organism>
<accession>A0LRM6</accession>
<feature type="chain" id="PRO_0000293739" description="Small ribosomal subunit protein uS3">
    <location>
        <begin position="1"/>
        <end position="341"/>
    </location>
</feature>
<feature type="domain" description="KH type-2" evidence="1">
    <location>
        <begin position="38"/>
        <end position="106"/>
    </location>
</feature>
<feature type="region of interest" description="Disordered" evidence="2">
    <location>
        <begin position="224"/>
        <end position="246"/>
    </location>
</feature>
<feature type="region of interest" description="Disordered" evidence="2">
    <location>
        <begin position="274"/>
        <end position="341"/>
    </location>
</feature>
<feature type="compositionally biased region" description="Low complexity" evidence="2">
    <location>
        <begin position="285"/>
        <end position="303"/>
    </location>
</feature>
<feature type="compositionally biased region" description="Low complexity" evidence="2">
    <location>
        <begin position="311"/>
        <end position="333"/>
    </location>
</feature>
<sequence>MGQKVNPHGFRLGITTEFSSRWYADRMYRDYVKEDVAIRRMMTRGMERAGISRVEIERTRDRVRVDIHTARPGIVIGRRGAEADRIRADLEKLTNKQVQLNILEVKNPEIDAQLVAQGVAEQLSQRVSFRRAMRKALQSALKAGAKGVRVQVAGRLGGAEMSRTEFYREGRVPLHTLRADIDYGFYEARTTFGRIGVKVWIYKGDVVAGRDHEAARVAARVQQRAVRGRSARREQPAAESPALETAAPAVAEPGAAAAPAAAGADVPVVADTAPAGQGAAERPVAEQPVVTAEPAAAAAVTGETGTGGSNAAPAEPTTSAAAEEAPGGADAPSDATETKEG</sequence>
<evidence type="ECO:0000255" key="1">
    <source>
        <dbReference type="HAMAP-Rule" id="MF_01309"/>
    </source>
</evidence>
<evidence type="ECO:0000256" key="2">
    <source>
        <dbReference type="SAM" id="MobiDB-lite"/>
    </source>
</evidence>
<evidence type="ECO:0000305" key="3"/>
<reference key="1">
    <citation type="journal article" date="2009" name="Genome Res.">
        <title>Complete genome of the cellulolytic thermophile Acidothermus cellulolyticus 11B provides insights into its ecophysiological and evolutionary adaptations.</title>
        <authorList>
            <person name="Barabote R.D."/>
            <person name="Xie G."/>
            <person name="Leu D.H."/>
            <person name="Normand P."/>
            <person name="Necsulea A."/>
            <person name="Daubin V."/>
            <person name="Medigue C."/>
            <person name="Adney W.S."/>
            <person name="Xu X.C."/>
            <person name="Lapidus A."/>
            <person name="Parales R.E."/>
            <person name="Detter C."/>
            <person name="Pujic P."/>
            <person name="Bruce D."/>
            <person name="Lavire C."/>
            <person name="Challacombe J.F."/>
            <person name="Brettin T.S."/>
            <person name="Berry A.M."/>
        </authorList>
    </citation>
    <scope>NUCLEOTIDE SEQUENCE [LARGE SCALE GENOMIC DNA]</scope>
    <source>
        <strain>ATCC 43068 / DSM 8971 / 11B</strain>
    </source>
</reference>
<proteinExistence type="inferred from homology"/>
<protein>
    <recommendedName>
        <fullName evidence="1">Small ribosomal subunit protein uS3</fullName>
    </recommendedName>
    <alternativeName>
        <fullName evidence="3">30S ribosomal protein S3</fullName>
    </alternativeName>
</protein>
<keyword id="KW-1185">Reference proteome</keyword>
<keyword id="KW-0687">Ribonucleoprotein</keyword>
<keyword id="KW-0689">Ribosomal protein</keyword>
<keyword id="KW-0694">RNA-binding</keyword>
<keyword id="KW-0699">rRNA-binding</keyword>
<dbReference type="EMBL" id="CP000481">
    <property type="protein sequence ID" value="ABK52086.1"/>
    <property type="molecule type" value="Genomic_DNA"/>
</dbReference>
<dbReference type="SMR" id="A0LRM6"/>
<dbReference type="FunCoup" id="A0LRM6">
    <property type="interactions" value="198"/>
</dbReference>
<dbReference type="STRING" id="351607.Acel_0312"/>
<dbReference type="KEGG" id="ace:Acel_0312"/>
<dbReference type="eggNOG" id="COG0092">
    <property type="taxonomic scope" value="Bacteria"/>
</dbReference>
<dbReference type="HOGENOM" id="CLU_058591_0_0_11"/>
<dbReference type="InParanoid" id="A0LRM6"/>
<dbReference type="OrthoDB" id="9806396at2"/>
<dbReference type="Proteomes" id="UP000008221">
    <property type="component" value="Chromosome"/>
</dbReference>
<dbReference type="GO" id="GO:0022627">
    <property type="term" value="C:cytosolic small ribosomal subunit"/>
    <property type="evidence" value="ECO:0007669"/>
    <property type="project" value="TreeGrafter"/>
</dbReference>
<dbReference type="GO" id="GO:0003729">
    <property type="term" value="F:mRNA binding"/>
    <property type="evidence" value="ECO:0007669"/>
    <property type="project" value="UniProtKB-UniRule"/>
</dbReference>
<dbReference type="GO" id="GO:0019843">
    <property type="term" value="F:rRNA binding"/>
    <property type="evidence" value="ECO:0007669"/>
    <property type="project" value="UniProtKB-UniRule"/>
</dbReference>
<dbReference type="GO" id="GO:0003735">
    <property type="term" value="F:structural constituent of ribosome"/>
    <property type="evidence" value="ECO:0007669"/>
    <property type="project" value="InterPro"/>
</dbReference>
<dbReference type="GO" id="GO:0006412">
    <property type="term" value="P:translation"/>
    <property type="evidence" value="ECO:0007669"/>
    <property type="project" value="UniProtKB-UniRule"/>
</dbReference>
<dbReference type="CDD" id="cd02412">
    <property type="entry name" value="KH-II_30S_S3"/>
    <property type="match status" value="1"/>
</dbReference>
<dbReference type="FunFam" id="3.30.1140.32:FF:000002">
    <property type="entry name" value="30S ribosomal protein S3"/>
    <property type="match status" value="1"/>
</dbReference>
<dbReference type="FunFam" id="3.30.300.20:FF:000001">
    <property type="entry name" value="30S ribosomal protein S3"/>
    <property type="match status" value="1"/>
</dbReference>
<dbReference type="Gene3D" id="3.30.300.20">
    <property type="match status" value="1"/>
</dbReference>
<dbReference type="Gene3D" id="3.30.1140.32">
    <property type="entry name" value="Ribosomal protein S3, C-terminal domain"/>
    <property type="match status" value="1"/>
</dbReference>
<dbReference type="HAMAP" id="MF_01309_B">
    <property type="entry name" value="Ribosomal_uS3_B"/>
    <property type="match status" value="1"/>
</dbReference>
<dbReference type="InterPro" id="IPR004087">
    <property type="entry name" value="KH_dom"/>
</dbReference>
<dbReference type="InterPro" id="IPR015946">
    <property type="entry name" value="KH_dom-like_a/b"/>
</dbReference>
<dbReference type="InterPro" id="IPR004044">
    <property type="entry name" value="KH_dom_type_2"/>
</dbReference>
<dbReference type="InterPro" id="IPR009019">
    <property type="entry name" value="KH_sf_prok-type"/>
</dbReference>
<dbReference type="InterPro" id="IPR036419">
    <property type="entry name" value="Ribosomal_S3_C_sf"/>
</dbReference>
<dbReference type="InterPro" id="IPR005704">
    <property type="entry name" value="Ribosomal_uS3_bac-typ"/>
</dbReference>
<dbReference type="InterPro" id="IPR001351">
    <property type="entry name" value="Ribosomal_uS3_C"/>
</dbReference>
<dbReference type="InterPro" id="IPR018280">
    <property type="entry name" value="Ribosomal_uS3_CS"/>
</dbReference>
<dbReference type="NCBIfam" id="TIGR01009">
    <property type="entry name" value="rpsC_bact"/>
    <property type="match status" value="1"/>
</dbReference>
<dbReference type="PANTHER" id="PTHR11760">
    <property type="entry name" value="30S/40S RIBOSOMAL PROTEIN S3"/>
    <property type="match status" value="1"/>
</dbReference>
<dbReference type="PANTHER" id="PTHR11760:SF19">
    <property type="entry name" value="SMALL RIBOSOMAL SUBUNIT PROTEIN US3C"/>
    <property type="match status" value="1"/>
</dbReference>
<dbReference type="Pfam" id="PF07650">
    <property type="entry name" value="KH_2"/>
    <property type="match status" value="1"/>
</dbReference>
<dbReference type="Pfam" id="PF00189">
    <property type="entry name" value="Ribosomal_S3_C"/>
    <property type="match status" value="1"/>
</dbReference>
<dbReference type="SMART" id="SM00322">
    <property type="entry name" value="KH"/>
    <property type="match status" value="1"/>
</dbReference>
<dbReference type="SUPFAM" id="SSF54814">
    <property type="entry name" value="Prokaryotic type KH domain (KH-domain type II)"/>
    <property type="match status" value="1"/>
</dbReference>
<dbReference type="SUPFAM" id="SSF54821">
    <property type="entry name" value="Ribosomal protein S3 C-terminal domain"/>
    <property type="match status" value="1"/>
</dbReference>
<dbReference type="PROSITE" id="PS50823">
    <property type="entry name" value="KH_TYPE_2"/>
    <property type="match status" value="1"/>
</dbReference>
<dbReference type="PROSITE" id="PS00548">
    <property type="entry name" value="RIBOSOMAL_S3"/>
    <property type="match status" value="1"/>
</dbReference>
<comment type="function">
    <text evidence="1">Binds the lower part of the 30S subunit head. Binds mRNA in the 70S ribosome, positioning it for translation.</text>
</comment>
<comment type="subunit">
    <text evidence="1">Part of the 30S ribosomal subunit. Forms a tight complex with proteins S10 and S14.</text>
</comment>
<comment type="similarity">
    <text evidence="1">Belongs to the universal ribosomal protein uS3 family.</text>
</comment>
<gene>
    <name evidence="1" type="primary">rpsC</name>
    <name type="ordered locus">Acel_0312</name>
</gene>